<keyword id="KW-0217">Developmental protein</keyword>
<keyword id="KW-0256">Endoplasmic reticulum</keyword>
<keyword id="KW-0328">Glycosyltransferase</keyword>
<keyword id="KW-0472">Membrane</keyword>
<keyword id="KW-0808">Transferase</keyword>
<keyword id="KW-0812">Transmembrane</keyword>
<keyword id="KW-1133">Transmembrane helix</keyword>
<reference key="1">
    <citation type="journal article" date="1997" name="Gene">
        <title>Gene within gene configuration and expression of the Drosophila melanogaster genes lethal(2) neighbour of tid [l(2)not] and lethal(2) relative of tid.</title>
        <authorList>
            <person name="Kurzik-Dumke U."/>
            <person name="Kaymer M."/>
            <person name="Gundacker D."/>
            <person name="Debes A."/>
            <person name="Labitzke K."/>
        </authorList>
    </citation>
    <scope>NUCLEOTIDE SEQUENCE [GENOMIC DNA]</scope>
    <source>
        <strain>Apxo</strain>
    </source>
</reference>
<name>ALG3B_DROME</name>
<feature type="chain" id="PRO_0000080569" description="Dolichyl-P-Man:Man5GlcNAc2-PP-dolichol alpha-1,3-mannosyltransferase l(2)not2">
    <location>
        <begin position="1"/>
        <end position="484"/>
    </location>
</feature>
<feature type="topological domain" description="Cytoplasmic" evidence="4">
    <location>
        <begin position="1"/>
        <end position="43"/>
    </location>
</feature>
<feature type="transmembrane region" description="Helical" evidence="3">
    <location>
        <begin position="44"/>
        <end position="64"/>
    </location>
</feature>
<feature type="topological domain" description="Lumenal" evidence="4">
    <location>
        <begin position="65"/>
        <end position="97"/>
    </location>
</feature>
<feature type="transmembrane region" description="Helical" evidence="3">
    <location>
        <begin position="98"/>
        <end position="118"/>
    </location>
</feature>
<feature type="topological domain" description="Cytoplasmic" evidence="4">
    <location>
        <begin position="119"/>
        <end position="125"/>
    </location>
</feature>
<feature type="transmembrane region" description="Helical" evidence="3">
    <location>
        <begin position="126"/>
        <end position="146"/>
    </location>
</feature>
<feature type="topological domain" description="Lumenal" evidence="4">
    <location>
        <begin position="147"/>
        <end position="171"/>
    </location>
</feature>
<feature type="transmembrane region" description="Helical" evidence="3">
    <location>
        <begin position="172"/>
        <end position="192"/>
    </location>
</feature>
<feature type="topological domain" description="Cytoplasmic" evidence="4">
    <location>
        <begin position="193"/>
        <end position="211"/>
    </location>
</feature>
<feature type="transmembrane region" description="Helical" evidence="3">
    <location>
        <begin position="212"/>
        <end position="232"/>
    </location>
</feature>
<feature type="topological domain" description="Lumenal" evidence="4">
    <location>
        <position position="233"/>
    </location>
</feature>
<feature type="transmembrane region" description="Helical" evidence="3">
    <location>
        <begin position="234"/>
        <end position="254"/>
    </location>
</feature>
<feature type="topological domain" description="Cytoplasmic" evidence="4">
    <location>
        <begin position="255"/>
        <end position="294"/>
    </location>
</feature>
<feature type="transmembrane region" description="Helical" evidence="3">
    <location>
        <begin position="295"/>
        <end position="315"/>
    </location>
</feature>
<feature type="topological domain" description="Lumenal" evidence="4">
    <location>
        <begin position="316"/>
        <end position="403"/>
    </location>
</feature>
<feature type="transmembrane region" description="Helical" evidence="3">
    <location>
        <begin position="404"/>
        <end position="424"/>
    </location>
</feature>
<feature type="topological domain" description="Cytoplasmic" evidence="4">
    <location>
        <begin position="425"/>
        <end position="426"/>
    </location>
</feature>
<feature type="transmembrane region" description="Helical" evidence="3">
    <location>
        <begin position="427"/>
        <end position="447"/>
    </location>
</feature>
<feature type="topological domain" description="Lumenal" evidence="4">
    <location>
        <begin position="448"/>
        <end position="484"/>
    </location>
</feature>
<evidence type="ECO:0000250" key="1">
    <source>
        <dbReference type="UniProtKB" id="Q27333"/>
    </source>
</evidence>
<evidence type="ECO:0000250" key="2">
    <source>
        <dbReference type="UniProtKB" id="Q92685"/>
    </source>
</evidence>
<evidence type="ECO:0000255" key="3"/>
<evidence type="ECO:0000305" key="4"/>
<protein>
    <recommendedName>
        <fullName evidence="1">Dolichyl-P-Man:Man5GlcNAc2-PP-dolichol alpha-1,3-mannosyltransferase l(2)not2</fullName>
        <ecNumber evidence="2">2.4.1.258</ecNumber>
    </recommendedName>
    <alternativeName>
        <fullName>Lethal(2)neighbor of tid protein 2</fullName>
    </alternativeName>
    <alternativeName>
        <fullName>NOT53</fullName>
    </alternativeName>
</protein>
<gene>
    <name evidence="4" type="primary">l(2)not2</name>
    <name evidence="4" type="synonym">Alg3</name>
</gene>
<organism>
    <name type="scientific">Drosophila melanogaster</name>
    <name type="common">Fruit fly</name>
    <dbReference type="NCBI Taxonomy" id="7227"/>
    <lineage>
        <taxon>Eukaryota</taxon>
        <taxon>Metazoa</taxon>
        <taxon>Ecdysozoa</taxon>
        <taxon>Arthropoda</taxon>
        <taxon>Hexapoda</taxon>
        <taxon>Insecta</taxon>
        <taxon>Pterygota</taxon>
        <taxon>Neoptera</taxon>
        <taxon>Endopterygota</taxon>
        <taxon>Diptera</taxon>
        <taxon>Brachycera</taxon>
        <taxon>Muscomorpha</taxon>
        <taxon>Ephydroidea</taxon>
        <taxon>Drosophilidae</taxon>
        <taxon>Drosophila</taxon>
        <taxon>Sophophora</taxon>
    </lineage>
</organism>
<proteinExistence type="evidence at transcript level"/>
<comment type="function">
    <text evidence="1">Probable alpha-1,3-mannosyltransferase involved in the N-glycosylation pathway (By similarity). Involved in glycosylation of the TNF receptor grnd, regulating its ligand affinity (By similarity). Required for normal epithelial growth and architecture (By similarity). Suppressor of JNK-dependent intestinal stem cell proliferation (By similarity).</text>
</comment>
<comment type="catalytic activity">
    <reaction evidence="2">
        <text>an alpha-D-Man-(1-&gt;2)-alpha-D-Man-(1-&gt;2)-alpha-D-Man-(1-&gt;3)-[alpha-D-Man-(1-&gt;6)]-beta-D-Man-(1-&gt;4)-beta-D-GlcNAc-(1-&gt;4)-alpha-D-GlcNAc-diphospho-di-trans,poly-cis-dolichol + a di-trans,poly-cis-dolichyl beta-D-mannosyl phosphate = an alpha-D-Man-(1-&gt;2)-alpha-D-Man-(1-&gt;2)-alpha-D-Man-(1-&gt;3)-[alpha-D-Man-(1-&gt;3)-alpha-D-Man-(1-&gt;6)]-beta-D-Man-(1-&gt;4)-beta-D-GlcNAc-(1-&gt;4)-alpha-D-GlcNAc-diphospho-di-trans,poly-cis-dolichol + a di-trans,poly-cis-dolichyl phosphate + H(+)</text>
        <dbReference type="Rhea" id="RHEA:29527"/>
        <dbReference type="Rhea" id="RHEA-COMP:19498"/>
        <dbReference type="Rhea" id="RHEA-COMP:19501"/>
        <dbReference type="Rhea" id="RHEA-COMP:19516"/>
        <dbReference type="Rhea" id="RHEA-COMP:19517"/>
        <dbReference type="ChEBI" id="CHEBI:15378"/>
        <dbReference type="ChEBI" id="CHEBI:57683"/>
        <dbReference type="ChEBI" id="CHEBI:58211"/>
        <dbReference type="ChEBI" id="CHEBI:132515"/>
        <dbReference type="ChEBI" id="CHEBI:132516"/>
        <dbReference type="EC" id="2.4.1.258"/>
    </reaction>
    <physiologicalReaction direction="left-to-right" evidence="2">
        <dbReference type="Rhea" id="RHEA:29528"/>
    </physiologicalReaction>
</comment>
<comment type="pathway">
    <text evidence="1">Protein modification; protein glycosylation.</text>
</comment>
<comment type="subcellular location">
    <subcellularLocation>
        <location evidence="4">Endoplasmic reticulum membrane</location>
        <topology evidence="4">Multi-pass membrane protein</topology>
    </subcellularLocation>
</comment>
<comment type="developmental stage">
    <text>Expressed only in embryos.</text>
</comment>
<comment type="miscellaneous">
    <text evidence="4">In strains Harvich and Apxo, there are 2 genes which code for l(2)not/Alg3 protein. They differ in their C-terminus.</text>
</comment>
<comment type="similarity">
    <text evidence="4">Belongs to the glycosyltransferase ALG3 family.</text>
</comment>
<sequence length="484" mass="55458">MAPPKAASHRPAVRRKKSGTLVDSILDKYLNVRFFKYLLLEPAALPIVGLFVLLAELVINVVVIQRVPYTEIDWVAYMQECEGFLNGTTNYSLLRGDTGPLVYPAAFVYIYSALYYVTSHGTNVRLAQYIFAGIYLLQLALVLRLYSKSRKVPPYVLVLSAFTSYRIHSIYVLRLFNDPVAVLLLYAALNLFLDRRWTLGSTFFSLAVGVKMNILLFAPALLLFYLANLGLLRTILQLAVCGVIQLLLGAPFLLTHPVEYLRGSFDLGRIFEHKWTVNYRFLSRDVFENRTFHVSLLGLHLLLLLAFAKPTWTFFQSYVRLRRIEDQLQPQIAQQNLELKAQKRPKKVEKDKDKDQKKFTTEQQSFLKAFEKSLQKASGGKATPAPAQAEPERYGIHFDRCTQLALLPFFLCNLVGVACSRSLHYQFYVWYFHSLPYLAWSTPYSLGVRCLILGLIEYCWNTYPSTNFSSAALHFTHIIPPYQL</sequence>
<accession>P82149</accession>
<dbReference type="EC" id="2.4.1.258" evidence="2"/>
<dbReference type="EMBL" id="Y10074">
    <property type="protein sequence ID" value="CAA71168.1"/>
    <property type="molecule type" value="Genomic_DNA"/>
</dbReference>
<dbReference type="EMBL" id="X95244">
    <property type="protein sequence ID" value="CAA64533.1"/>
    <property type="molecule type" value="Genomic_DNA"/>
</dbReference>
<dbReference type="SMR" id="P82149"/>
<dbReference type="AGR" id="FB:FBgn0011297"/>
<dbReference type="FlyBase" id="FBgn0011297">
    <property type="gene designation" value="Alg3"/>
</dbReference>
<dbReference type="VEuPathDB" id="VectorBase:FBgn0011297"/>
<dbReference type="HOGENOM" id="CLU_035382_3_0_1"/>
<dbReference type="OrthoDB" id="20028at2759"/>
<dbReference type="SignaLink" id="P82149"/>
<dbReference type="UniPathway" id="UPA00378"/>
<dbReference type="ExpressionAtlas" id="P82149">
    <property type="expression patterns" value="baseline and differential"/>
</dbReference>
<dbReference type="GO" id="GO:0005783">
    <property type="term" value="C:endoplasmic reticulum"/>
    <property type="evidence" value="ECO:0000318"/>
    <property type="project" value="GO_Central"/>
</dbReference>
<dbReference type="GO" id="GO:0005789">
    <property type="term" value="C:endoplasmic reticulum membrane"/>
    <property type="evidence" value="ECO:0007669"/>
    <property type="project" value="UniProtKB-SubCell"/>
</dbReference>
<dbReference type="GO" id="GO:0052925">
    <property type="term" value="F:dol-P-Man:Man(5)GlcNAc(2)-PP-Dol alpha-1,3-mannosyltransferase activity"/>
    <property type="evidence" value="ECO:0000318"/>
    <property type="project" value="GO_Central"/>
</dbReference>
<dbReference type="GO" id="GO:0006486">
    <property type="term" value="P:protein glycosylation"/>
    <property type="evidence" value="ECO:0000318"/>
    <property type="project" value="GO_Central"/>
</dbReference>
<dbReference type="InterPro" id="IPR007873">
    <property type="entry name" value="Glycosyltransferase_ALG3"/>
</dbReference>
<dbReference type="PANTHER" id="PTHR12646:SF0">
    <property type="entry name" value="DOL-P-MAN:MAN(5)GLCNAC(2)-PP-DOL ALPHA-1,3-MANNOSYLTRANSFERASE"/>
    <property type="match status" value="1"/>
</dbReference>
<dbReference type="PANTHER" id="PTHR12646">
    <property type="entry name" value="NOT56 - RELATED"/>
    <property type="match status" value="1"/>
</dbReference>
<dbReference type="Pfam" id="PF05208">
    <property type="entry name" value="ALG3"/>
    <property type="match status" value="1"/>
</dbReference>